<evidence type="ECO:0000250" key="1">
    <source>
        <dbReference type="UniProtKB" id="Q9BY42"/>
    </source>
</evidence>
<evidence type="ECO:0000256" key="2">
    <source>
        <dbReference type="SAM" id="MobiDB-lite"/>
    </source>
</evidence>
<evidence type="ECO:0000305" key="3"/>
<comment type="function">
    <text evidence="1">Replication termination factor which is a component of the elongating replisome. Required for ATR pathway signaling upon DNA damage and has a positive activity during DNA replication. Might function to facilitate fork pausing at replication fork barriers like the rDNA. May be globally required to stimulate ATR signaling after the fork stalls or encounters a lesion. Interacts with nascent DNA.</text>
</comment>
<comment type="subunit">
    <text evidence="1">Interacts with DDI2; probably also interacts with DDI1.</text>
</comment>
<comment type="subcellular location">
    <subcellularLocation>
        <location evidence="1">Chromosome</location>
    </subcellularLocation>
    <text evidence="1">Localizes at the replication fork.</text>
</comment>
<comment type="PTM">
    <text evidence="1">Undergoes proteasomal degradation, via DDI1 and DDI2. Removal from stalled replisomes and degradation are required for genome stability.</text>
</comment>
<comment type="similarity">
    <text evidence="3">Belongs to the rtf2 family.</text>
</comment>
<sequence>MGCDGGTIPKRHELVKGPKKVEKVDKDAELVAQWNYCTLSQEILRRPIVACELGRLYNKDAVIEFLLDKSSEKALGKAASHIKSIKNVTELRLSDNPAWEGDKGNTKGDKHDDLQRARFICPVVGLEMNGRHRFCFLRCCGCVFSERALKEIKAEVCHTCGAAFQEDDVIVLNGTKEDVEVLKSRIEERRLRAKLGKKTKKPKVAESVSKSEVSEETPGPSKVKTGKPEETSLDTREKKTNSAPKSAAAHGITSGKAAKRSIADSEESEAYKSLFTTHSSAKRSKEESAHWVTHTSYCF</sequence>
<dbReference type="EMBL" id="BC120045">
    <property type="protein sequence ID" value="AAI20046.1"/>
    <property type="molecule type" value="mRNA"/>
</dbReference>
<dbReference type="RefSeq" id="NP_001069093.1">
    <property type="nucleotide sequence ID" value="NM_001075625.2"/>
</dbReference>
<dbReference type="FunCoup" id="Q0VCR1">
    <property type="interactions" value="3955"/>
</dbReference>
<dbReference type="STRING" id="9913.ENSBTAP00000039110"/>
<dbReference type="PaxDb" id="9913-ENSBTAP00000039110"/>
<dbReference type="GeneID" id="513536"/>
<dbReference type="KEGG" id="bta:513536"/>
<dbReference type="CTD" id="51507"/>
<dbReference type="eggNOG" id="KOG3113">
    <property type="taxonomic scope" value="Eukaryota"/>
</dbReference>
<dbReference type="InParanoid" id="Q0VCR1"/>
<dbReference type="OrthoDB" id="247013at2759"/>
<dbReference type="Proteomes" id="UP000009136">
    <property type="component" value="Unplaced"/>
</dbReference>
<dbReference type="GO" id="GO:0005634">
    <property type="term" value="C:nucleus"/>
    <property type="evidence" value="ECO:0000318"/>
    <property type="project" value="GO_Central"/>
</dbReference>
<dbReference type="GO" id="GO:0005657">
    <property type="term" value="C:replication fork"/>
    <property type="evidence" value="ECO:0000250"/>
    <property type="project" value="UniProtKB"/>
</dbReference>
<dbReference type="GO" id="GO:0003677">
    <property type="term" value="F:DNA binding"/>
    <property type="evidence" value="ECO:0000250"/>
    <property type="project" value="UniProtKB"/>
</dbReference>
<dbReference type="GO" id="GO:0072711">
    <property type="term" value="P:cellular response to hydroxyurea"/>
    <property type="evidence" value="ECO:0000250"/>
    <property type="project" value="UniProtKB"/>
</dbReference>
<dbReference type="GO" id="GO:1902979">
    <property type="term" value="P:mitotic DNA replication termination"/>
    <property type="evidence" value="ECO:0007669"/>
    <property type="project" value="InterPro"/>
</dbReference>
<dbReference type="GO" id="GO:0097752">
    <property type="term" value="P:regulation of DNA stability"/>
    <property type="evidence" value="ECO:0000250"/>
    <property type="project" value="UniProtKB"/>
</dbReference>
<dbReference type="CDD" id="cd16653">
    <property type="entry name" value="RING-like_Rtf2"/>
    <property type="match status" value="1"/>
</dbReference>
<dbReference type="InterPro" id="IPR006735">
    <property type="entry name" value="Rtf2"/>
</dbReference>
<dbReference type="InterPro" id="IPR027799">
    <property type="entry name" value="Rtf2_RING-finger"/>
</dbReference>
<dbReference type="PANTHER" id="PTHR12775">
    <property type="entry name" value="PROTEIN C20ORF43 HOMOLOG"/>
    <property type="match status" value="1"/>
</dbReference>
<dbReference type="PANTHER" id="PTHR12775:SF0">
    <property type="entry name" value="REPLICATION TERMINATION FACTOR 2"/>
    <property type="match status" value="1"/>
</dbReference>
<dbReference type="Pfam" id="PF04641">
    <property type="entry name" value="Rtf2"/>
    <property type="match status" value="1"/>
</dbReference>
<proteinExistence type="evidence at transcript level"/>
<protein>
    <recommendedName>
        <fullName evidence="3">Replication termination factor 2</fullName>
        <shortName>RTF2</shortName>
    </recommendedName>
    <alternativeName>
        <fullName>Replication termination factor 2 domain-containing protein 1</fullName>
    </alternativeName>
</protein>
<accession>Q0VCR1</accession>
<keyword id="KW-0158">Chromosome</keyword>
<keyword id="KW-0597">Phosphoprotein</keyword>
<keyword id="KW-1185">Reference proteome</keyword>
<name>RTF2_BOVIN</name>
<organism>
    <name type="scientific">Bos taurus</name>
    <name type="common">Bovine</name>
    <dbReference type="NCBI Taxonomy" id="9913"/>
    <lineage>
        <taxon>Eukaryota</taxon>
        <taxon>Metazoa</taxon>
        <taxon>Chordata</taxon>
        <taxon>Craniata</taxon>
        <taxon>Vertebrata</taxon>
        <taxon>Euteleostomi</taxon>
        <taxon>Mammalia</taxon>
        <taxon>Eutheria</taxon>
        <taxon>Laurasiatheria</taxon>
        <taxon>Artiodactyla</taxon>
        <taxon>Ruminantia</taxon>
        <taxon>Pecora</taxon>
        <taxon>Bovidae</taxon>
        <taxon>Bovinae</taxon>
        <taxon>Bos</taxon>
    </lineage>
</organism>
<reference key="1">
    <citation type="submission" date="2006-08" db="EMBL/GenBank/DDBJ databases">
        <authorList>
            <consortium name="NIH - Mammalian Gene Collection (MGC) project"/>
        </authorList>
    </citation>
    <scope>NUCLEOTIDE SEQUENCE [LARGE SCALE MRNA]</scope>
    <source>
        <strain>Hereford</strain>
        <tissue>Fetal pons</tissue>
    </source>
</reference>
<gene>
    <name type="primary">RTF2</name>
    <name type="synonym">RTFDC1</name>
</gene>
<feature type="chain" id="PRO_0000327233" description="Replication termination factor 2">
    <location>
        <begin position="1"/>
        <end position="299"/>
    </location>
</feature>
<feature type="region of interest" description="Disordered" evidence="2">
    <location>
        <begin position="195"/>
        <end position="271"/>
    </location>
</feature>
<feature type="compositionally biased region" description="Basic and acidic residues" evidence="2">
    <location>
        <begin position="226"/>
        <end position="240"/>
    </location>
</feature>
<feature type="modified residue" description="Phosphoserine" evidence="1">
    <location>
        <position position="280"/>
    </location>
</feature>